<dbReference type="EC" id="6.3.1.13" evidence="1"/>
<dbReference type="EMBL" id="CP001958">
    <property type="protein sequence ID" value="ADG97693.1"/>
    <property type="molecule type" value="Genomic_DNA"/>
</dbReference>
<dbReference type="RefSeq" id="WP_013138149.1">
    <property type="nucleotide sequence ID" value="NC_014168.1"/>
</dbReference>
<dbReference type="SMR" id="D6ZFG9"/>
<dbReference type="STRING" id="640132.Srot_1222"/>
<dbReference type="KEGG" id="srt:Srot_1222"/>
<dbReference type="eggNOG" id="COG0215">
    <property type="taxonomic scope" value="Bacteria"/>
</dbReference>
<dbReference type="HOGENOM" id="CLU_013528_0_0_11"/>
<dbReference type="OrthoDB" id="9815130at2"/>
<dbReference type="Proteomes" id="UP000002247">
    <property type="component" value="Chromosome"/>
</dbReference>
<dbReference type="GO" id="GO:0005829">
    <property type="term" value="C:cytosol"/>
    <property type="evidence" value="ECO:0007669"/>
    <property type="project" value="TreeGrafter"/>
</dbReference>
<dbReference type="GO" id="GO:0005524">
    <property type="term" value="F:ATP binding"/>
    <property type="evidence" value="ECO:0007669"/>
    <property type="project" value="UniProtKB-KW"/>
</dbReference>
<dbReference type="GO" id="GO:0035446">
    <property type="term" value="F:cysteine-glucosaminylinositol ligase activity"/>
    <property type="evidence" value="ECO:0007669"/>
    <property type="project" value="UniProtKB-UniRule"/>
</dbReference>
<dbReference type="GO" id="GO:0004817">
    <property type="term" value="F:cysteine-tRNA ligase activity"/>
    <property type="evidence" value="ECO:0007669"/>
    <property type="project" value="TreeGrafter"/>
</dbReference>
<dbReference type="GO" id="GO:0008270">
    <property type="term" value="F:zinc ion binding"/>
    <property type="evidence" value="ECO:0007669"/>
    <property type="project" value="UniProtKB-UniRule"/>
</dbReference>
<dbReference type="GO" id="GO:0006423">
    <property type="term" value="P:cysteinyl-tRNA aminoacylation"/>
    <property type="evidence" value="ECO:0007669"/>
    <property type="project" value="TreeGrafter"/>
</dbReference>
<dbReference type="GO" id="GO:0010125">
    <property type="term" value="P:mycothiol biosynthetic process"/>
    <property type="evidence" value="ECO:0007669"/>
    <property type="project" value="UniProtKB-UniRule"/>
</dbReference>
<dbReference type="FunFam" id="3.40.50.620:FF:000134">
    <property type="entry name" value="L-cysteine:1D-myo-inositol 2-amino-2-deoxy-alpha-D-glucopyranoside ligase"/>
    <property type="match status" value="1"/>
</dbReference>
<dbReference type="Gene3D" id="1.20.120.640">
    <property type="entry name" value="Anticodon-binding domain of a subclass of class I aminoacyl-tRNA synthetases"/>
    <property type="match status" value="1"/>
</dbReference>
<dbReference type="Gene3D" id="3.40.50.620">
    <property type="entry name" value="HUPs"/>
    <property type="match status" value="1"/>
</dbReference>
<dbReference type="HAMAP" id="MF_01697">
    <property type="entry name" value="MshC"/>
    <property type="match status" value="1"/>
</dbReference>
<dbReference type="InterPro" id="IPR024909">
    <property type="entry name" value="Cys-tRNA/MSH_ligase"/>
</dbReference>
<dbReference type="InterPro" id="IPR017812">
    <property type="entry name" value="Mycothiol_ligase_MshC"/>
</dbReference>
<dbReference type="InterPro" id="IPR014729">
    <property type="entry name" value="Rossmann-like_a/b/a_fold"/>
</dbReference>
<dbReference type="InterPro" id="IPR032678">
    <property type="entry name" value="tRNA-synt_1_cat_dom"/>
</dbReference>
<dbReference type="NCBIfam" id="TIGR03447">
    <property type="entry name" value="mycothiol_MshC"/>
    <property type="match status" value="1"/>
</dbReference>
<dbReference type="PANTHER" id="PTHR10890:SF3">
    <property type="entry name" value="CYSTEINE--TRNA LIGASE, CYTOPLASMIC"/>
    <property type="match status" value="1"/>
</dbReference>
<dbReference type="PANTHER" id="PTHR10890">
    <property type="entry name" value="CYSTEINYL-TRNA SYNTHETASE"/>
    <property type="match status" value="1"/>
</dbReference>
<dbReference type="Pfam" id="PF01406">
    <property type="entry name" value="tRNA-synt_1e"/>
    <property type="match status" value="1"/>
</dbReference>
<dbReference type="PRINTS" id="PR00983">
    <property type="entry name" value="TRNASYNTHCYS"/>
</dbReference>
<dbReference type="SUPFAM" id="SSF52374">
    <property type="entry name" value="Nucleotidylyl transferase"/>
    <property type="match status" value="1"/>
</dbReference>
<evidence type="ECO:0000255" key="1">
    <source>
        <dbReference type="HAMAP-Rule" id="MF_01697"/>
    </source>
</evidence>
<comment type="function">
    <text evidence="1">Catalyzes the ATP-dependent condensation of GlcN-Ins and L-cysteine to form L-Cys-GlcN-Ins.</text>
</comment>
<comment type="catalytic activity">
    <reaction evidence="1">
        <text>1D-myo-inositol 2-amino-2-deoxy-alpha-D-glucopyranoside + L-cysteine + ATP = 1D-myo-inositol 2-(L-cysteinylamino)-2-deoxy-alpha-D-glucopyranoside + AMP + diphosphate + H(+)</text>
        <dbReference type="Rhea" id="RHEA:26176"/>
        <dbReference type="ChEBI" id="CHEBI:15378"/>
        <dbReference type="ChEBI" id="CHEBI:30616"/>
        <dbReference type="ChEBI" id="CHEBI:33019"/>
        <dbReference type="ChEBI" id="CHEBI:35235"/>
        <dbReference type="ChEBI" id="CHEBI:58886"/>
        <dbReference type="ChEBI" id="CHEBI:58887"/>
        <dbReference type="ChEBI" id="CHEBI:456215"/>
        <dbReference type="EC" id="6.3.1.13"/>
    </reaction>
</comment>
<comment type="cofactor">
    <cofactor evidence="1">
        <name>Zn(2+)</name>
        <dbReference type="ChEBI" id="CHEBI:29105"/>
    </cofactor>
    <text evidence="1">Binds 1 zinc ion per subunit.</text>
</comment>
<comment type="subunit">
    <text evidence="1">Monomer.</text>
</comment>
<comment type="similarity">
    <text evidence="1">Belongs to the class-I aminoacyl-tRNA synthetase family. MshC subfamily.</text>
</comment>
<reference key="1">
    <citation type="journal article" date="2010" name="Stand. Genomic Sci.">
        <title>Complete genome sequence of Segniliparus rotundus type strain (CDC 1076).</title>
        <authorList>
            <person name="Sikorski J."/>
            <person name="Lapidus A."/>
            <person name="Copeland A."/>
            <person name="Misra M."/>
            <person name="Glavina Del Rio T."/>
            <person name="Nolan M."/>
            <person name="Lucas S."/>
            <person name="Chen F."/>
            <person name="Tice H."/>
            <person name="Cheng J.F."/>
            <person name="Jando M."/>
            <person name="Schneider S."/>
            <person name="Bruce D."/>
            <person name="Goodwin L."/>
            <person name="Pitluck S."/>
            <person name="Liolios K."/>
            <person name="Mikhailova N."/>
            <person name="Pati A."/>
            <person name="Ivanova N."/>
            <person name="Mavromatis K."/>
            <person name="Chen A."/>
            <person name="Palaniappan K."/>
            <person name="Chertkov O."/>
            <person name="Land M."/>
            <person name="Hauser L."/>
            <person name="Chang Y.J."/>
            <person name="Jeffries C.D."/>
            <person name="Brettin T."/>
            <person name="Detter J.C."/>
            <person name="Han C."/>
            <person name="Rohde M."/>
            <person name="Goker M."/>
            <person name="Bristow J."/>
            <person name="Eisen J.A."/>
            <person name="Markowitz V."/>
            <person name="Hugenholtz P."/>
            <person name="Kyrpides N.C."/>
            <person name="Klenk H.P."/>
        </authorList>
    </citation>
    <scope>NUCLEOTIDE SEQUENCE [LARGE SCALE GENOMIC DNA]</scope>
    <source>
        <strain>ATCC BAA-972 / CDC 1076 / CIP 108378 / DSM 44985 / JCM 13578</strain>
    </source>
</reference>
<keyword id="KW-0067">ATP-binding</keyword>
<keyword id="KW-0436">Ligase</keyword>
<keyword id="KW-0479">Metal-binding</keyword>
<keyword id="KW-0547">Nucleotide-binding</keyword>
<keyword id="KW-1185">Reference proteome</keyword>
<keyword id="KW-0862">Zinc</keyword>
<proteinExistence type="inferred from homology"/>
<sequence>MRSWLAPSVPKLAGAGPRLRLWDSADRIIRPVTPGRTATMYVCGITPYDATHLGHAATYLAFDLVHRLWLDAGHQVAYAQNITDVDDPLLERADRDHRDWQELAAEQIELFRTDMSALRVLPPHEYVGVTESVGLVVAMVEKLLANQSAYVVAEGEYPDVYHRIAATEDFGYVSGYGREEMAQVFRERGGDPDRPGKADPLDALLWRAARPGEPSWPSPFGPGRPGWHVECSAIALDRIGFGFDVQGGGSDLVFPHHEFSAAHAQAQHGAGAADEHRRFARNYVHAGMIGLDGEKMSKSLGNLVFVSALRERGVDPSAIRLALFAGHYRADRSWDQGLLREAQERLARWRHAASLASGPAAHDVVARMREHLANDLDTPKALAALDSWSLEAAAHGGGDQEAPALVARAADALLGVQLTP</sequence>
<accession>D6ZFG9</accession>
<gene>
    <name evidence="1" type="primary">mshC</name>
    <name type="ordered locus">Srot_1222</name>
</gene>
<protein>
    <recommendedName>
        <fullName evidence="1">L-cysteine:1D-myo-inositol 2-amino-2-deoxy-alpha-D-glucopyranoside ligase</fullName>
        <shortName evidence="1">L-Cys:GlcN-Ins ligase</shortName>
        <ecNumber evidence="1">6.3.1.13</ecNumber>
    </recommendedName>
    <alternativeName>
        <fullName evidence="1">Mycothiol ligase</fullName>
        <shortName evidence="1">MSH ligase</shortName>
    </alternativeName>
</protein>
<feature type="chain" id="PRO_0000400484" description="L-cysteine:1D-myo-inositol 2-amino-2-deoxy-alpha-D-glucopyranoside ligase">
    <location>
        <begin position="1"/>
        <end position="420"/>
    </location>
</feature>
<feature type="short sequence motif" description="'HIGH' region" evidence="1">
    <location>
        <begin position="45"/>
        <end position="55"/>
    </location>
</feature>
<feature type="short sequence motif" description="'ERGGDP' region" evidence="1">
    <location>
        <begin position="187"/>
        <end position="192"/>
    </location>
</feature>
<feature type="short sequence motif" description="'KMSKS' region" evidence="1">
    <location>
        <begin position="295"/>
        <end position="299"/>
    </location>
</feature>
<feature type="binding site" evidence="1">
    <location>
        <begin position="43"/>
        <end position="46"/>
    </location>
    <ligand>
        <name>L-cysteinyl-5'-AMP</name>
        <dbReference type="ChEBI" id="CHEBI:144924"/>
    </ligand>
</feature>
<feature type="binding site" evidence="1">
    <location>
        <position position="43"/>
    </location>
    <ligand>
        <name>Zn(2+)</name>
        <dbReference type="ChEBI" id="CHEBI:29105"/>
    </ligand>
</feature>
<feature type="binding site" evidence="1">
    <location>
        <position position="58"/>
    </location>
    <ligand>
        <name>L-cysteinyl-5'-AMP</name>
        <dbReference type="ChEBI" id="CHEBI:144924"/>
    </ligand>
</feature>
<feature type="binding site" evidence="1">
    <location>
        <begin position="81"/>
        <end position="83"/>
    </location>
    <ligand>
        <name>L-cysteinyl-5'-AMP</name>
        <dbReference type="ChEBI" id="CHEBI:144924"/>
    </ligand>
</feature>
<feature type="binding site" evidence="1">
    <location>
        <position position="227"/>
    </location>
    <ligand>
        <name>L-cysteinyl-5'-AMP</name>
        <dbReference type="ChEBI" id="CHEBI:144924"/>
    </ligand>
</feature>
<feature type="binding site" evidence="1">
    <location>
        <position position="231"/>
    </location>
    <ligand>
        <name>Zn(2+)</name>
        <dbReference type="ChEBI" id="CHEBI:29105"/>
    </ligand>
</feature>
<feature type="binding site" evidence="1">
    <location>
        <begin position="249"/>
        <end position="251"/>
    </location>
    <ligand>
        <name>L-cysteinyl-5'-AMP</name>
        <dbReference type="ChEBI" id="CHEBI:144924"/>
    </ligand>
</feature>
<feature type="binding site" evidence="1">
    <location>
        <position position="256"/>
    </location>
    <ligand>
        <name>Zn(2+)</name>
        <dbReference type="ChEBI" id="CHEBI:29105"/>
    </ligand>
</feature>
<feature type="binding site" evidence="1">
    <location>
        <position position="289"/>
    </location>
    <ligand>
        <name>L-cysteinyl-5'-AMP</name>
        <dbReference type="ChEBI" id="CHEBI:144924"/>
    </ligand>
</feature>
<name>MSHC_SEGRD</name>
<organism>
    <name type="scientific">Segniliparus rotundus (strain ATCC BAA-972 / CDC 1076 / CIP 108378 / DSM 44985 / JCM 13578)</name>
    <dbReference type="NCBI Taxonomy" id="640132"/>
    <lineage>
        <taxon>Bacteria</taxon>
        <taxon>Bacillati</taxon>
        <taxon>Actinomycetota</taxon>
        <taxon>Actinomycetes</taxon>
        <taxon>Mycobacteriales</taxon>
        <taxon>Segniliparaceae</taxon>
        <taxon>Segniliparus</taxon>
    </lineage>
</organism>